<name>TATA_BACCZ</name>
<accession>Q63BU9</accession>
<feature type="chain" id="PRO_1000058952" description="Sec-independent protein translocase protein TatA">
    <location>
        <begin position="1"/>
        <end position="61"/>
    </location>
</feature>
<feature type="transmembrane region" description="Helical" evidence="1">
    <location>
        <begin position="1"/>
        <end position="21"/>
    </location>
</feature>
<keyword id="KW-1003">Cell membrane</keyword>
<keyword id="KW-0472">Membrane</keyword>
<keyword id="KW-0653">Protein transport</keyword>
<keyword id="KW-0811">Translocation</keyword>
<keyword id="KW-0812">Transmembrane</keyword>
<keyword id="KW-1133">Transmembrane helix</keyword>
<keyword id="KW-0813">Transport</keyword>
<gene>
    <name evidence="1" type="primary">tatA</name>
    <name type="ordered locus">BCE33L2026</name>
</gene>
<dbReference type="EMBL" id="CP000001">
    <property type="protein sequence ID" value="AAU18231.1"/>
    <property type="molecule type" value="Genomic_DNA"/>
</dbReference>
<dbReference type="RefSeq" id="WP_000492443.1">
    <property type="nucleotide sequence ID" value="NZ_CP009968.1"/>
</dbReference>
<dbReference type="SMR" id="Q63BU9"/>
<dbReference type="KEGG" id="bcz:BCE33L2026"/>
<dbReference type="PATRIC" id="fig|288681.22.peg.3498"/>
<dbReference type="Proteomes" id="UP000002612">
    <property type="component" value="Chromosome"/>
</dbReference>
<dbReference type="GO" id="GO:0033281">
    <property type="term" value="C:TAT protein transport complex"/>
    <property type="evidence" value="ECO:0007669"/>
    <property type="project" value="UniProtKB-UniRule"/>
</dbReference>
<dbReference type="GO" id="GO:0008320">
    <property type="term" value="F:protein transmembrane transporter activity"/>
    <property type="evidence" value="ECO:0007669"/>
    <property type="project" value="UniProtKB-UniRule"/>
</dbReference>
<dbReference type="GO" id="GO:0043953">
    <property type="term" value="P:protein transport by the Tat complex"/>
    <property type="evidence" value="ECO:0007669"/>
    <property type="project" value="UniProtKB-UniRule"/>
</dbReference>
<dbReference type="Gene3D" id="1.20.5.3310">
    <property type="match status" value="1"/>
</dbReference>
<dbReference type="HAMAP" id="MF_00236">
    <property type="entry name" value="TatA_E"/>
    <property type="match status" value="1"/>
</dbReference>
<dbReference type="InterPro" id="IPR003369">
    <property type="entry name" value="TatA/B/E"/>
</dbReference>
<dbReference type="InterPro" id="IPR006312">
    <property type="entry name" value="TatA/E"/>
</dbReference>
<dbReference type="NCBIfam" id="NF011430">
    <property type="entry name" value="PRK14861.1"/>
    <property type="match status" value="1"/>
</dbReference>
<dbReference type="NCBIfam" id="TIGR01411">
    <property type="entry name" value="tatAE"/>
    <property type="match status" value="1"/>
</dbReference>
<dbReference type="PANTHER" id="PTHR42982">
    <property type="entry name" value="SEC-INDEPENDENT PROTEIN TRANSLOCASE PROTEIN TATA"/>
    <property type="match status" value="1"/>
</dbReference>
<dbReference type="PANTHER" id="PTHR42982:SF1">
    <property type="entry name" value="SEC-INDEPENDENT PROTEIN TRANSLOCASE PROTEIN TATA"/>
    <property type="match status" value="1"/>
</dbReference>
<dbReference type="Pfam" id="PF02416">
    <property type="entry name" value="TatA_B_E"/>
    <property type="match status" value="1"/>
</dbReference>
<dbReference type="PRINTS" id="PR01506">
    <property type="entry name" value="TATBPROTEIN"/>
</dbReference>
<protein>
    <recommendedName>
        <fullName evidence="1">Sec-independent protein translocase protein TatA</fullName>
    </recommendedName>
</protein>
<sequence>MFSNIGFPGLILILVAVLILFGPKKLPEIGKALGETLKEFKKSTKELTDDAFQEKEKKEKM</sequence>
<comment type="function">
    <text evidence="1">Part of the twin-arginine translocation (Tat) system that transports large folded proteins containing a characteristic twin-arginine motif in their signal peptide across membranes. TatA could form the protein-conducting channel of the Tat system.</text>
</comment>
<comment type="subunit">
    <text evidence="1">Forms a complex with TatC.</text>
</comment>
<comment type="subcellular location">
    <subcellularLocation>
        <location evidence="1">Cell membrane</location>
        <topology evidence="1">Single-pass membrane protein</topology>
    </subcellularLocation>
</comment>
<comment type="similarity">
    <text evidence="1">Belongs to the TatA/E family.</text>
</comment>
<proteinExistence type="inferred from homology"/>
<evidence type="ECO:0000255" key="1">
    <source>
        <dbReference type="HAMAP-Rule" id="MF_00236"/>
    </source>
</evidence>
<organism>
    <name type="scientific">Bacillus cereus (strain ZK / E33L)</name>
    <dbReference type="NCBI Taxonomy" id="288681"/>
    <lineage>
        <taxon>Bacteria</taxon>
        <taxon>Bacillati</taxon>
        <taxon>Bacillota</taxon>
        <taxon>Bacilli</taxon>
        <taxon>Bacillales</taxon>
        <taxon>Bacillaceae</taxon>
        <taxon>Bacillus</taxon>
        <taxon>Bacillus cereus group</taxon>
    </lineage>
</organism>
<reference key="1">
    <citation type="journal article" date="2006" name="J. Bacteriol.">
        <title>Pathogenomic sequence analysis of Bacillus cereus and Bacillus thuringiensis isolates closely related to Bacillus anthracis.</title>
        <authorList>
            <person name="Han C.S."/>
            <person name="Xie G."/>
            <person name="Challacombe J.F."/>
            <person name="Altherr M.R."/>
            <person name="Bhotika S.S."/>
            <person name="Bruce D."/>
            <person name="Campbell C.S."/>
            <person name="Campbell M.L."/>
            <person name="Chen J."/>
            <person name="Chertkov O."/>
            <person name="Cleland C."/>
            <person name="Dimitrijevic M."/>
            <person name="Doggett N.A."/>
            <person name="Fawcett J.J."/>
            <person name="Glavina T."/>
            <person name="Goodwin L.A."/>
            <person name="Hill K.K."/>
            <person name="Hitchcock P."/>
            <person name="Jackson P.J."/>
            <person name="Keim P."/>
            <person name="Kewalramani A.R."/>
            <person name="Longmire J."/>
            <person name="Lucas S."/>
            <person name="Malfatti S."/>
            <person name="McMurry K."/>
            <person name="Meincke L.J."/>
            <person name="Misra M."/>
            <person name="Moseman B.L."/>
            <person name="Mundt M."/>
            <person name="Munk A.C."/>
            <person name="Okinaka R.T."/>
            <person name="Parson-Quintana B."/>
            <person name="Reilly L.P."/>
            <person name="Richardson P."/>
            <person name="Robinson D.L."/>
            <person name="Rubin E."/>
            <person name="Saunders E."/>
            <person name="Tapia R."/>
            <person name="Tesmer J.G."/>
            <person name="Thayer N."/>
            <person name="Thompson L.S."/>
            <person name="Tice H."/>
            <person name="Ticknor L.O."/>
            <person name="Wills P.L."/>
            <person name="Brettin T.S."/>
            <person name="Gilna P."/>
        </authorList>
    </citation>
    <scope>NUCLEOTIDE SEQUENCE [LARGE SCALE GENOMIC DNA]</scope>
    <source>
        <strain>ZK / E33L</strain>
    </source>
</reference>